<sequence length="224" mass="24184">MDQFIKQDETGDLIETGMNVANHFLSAPIQGTNSLSKASIIPGVAPVLIGNPEQKNIQHPTASHQGSKSKGRGSGVRSIIVPPSEAGNGGTQIPEPLFAQTGQGGIVTTVYQDPTIQPTGSYRSVELTKIGKERMINRFVEKPRISTPVTEFKRGAGSGCSRPDNPRGGHRREWSLSWVQGEVRVFEWCNPICSPITAAARFHSCKCGNCPAKCDQCERDYGPP</sequence>
<gene>
    <name evidence="7" type="primary">P/V/I</name>
</gene>
<proteinExistence type="evidence at protein level"/>
<protein>
    <recommendedName>
        <fullName>Non-structural protein V</fullName>
    </recommendedName>
    <alternativeName>
        <fullName>Non-structural protein NS1</fullName>
    </alternativeName>
</protein>
<evidence type="ECO:0000250" key="1">
    <source>
        <dbReference type="UniProtKB" id="P11207"/>
    </source>
</evidence>
<evidence type="ECO:0000250" key="2">
    <source>
        <dbReference type="UniProtKB" id="P30928"/>
    </source>
</evidence>
<evidence type="ECO:0000250" key="3">
    <source>
        <dbReference type="UniProtKB" id="Q8QV69"/>
    </source>
</evidence>
<evidence type="ECO:0000256" key="4">
    <source>
        <dbReference type="SAM" id="MobiDB-lite"/>
    </source>
</evidence>
<evidence type="ECO:0000269" key="5">
    <source>
    </source>
</evidence>
<evidence type="ECO:0000269" key="6">
    <source>
    </source>
</evidence>
<evidence type="ECO:0000305" key="7"/>
<feature type="chain" id="PRO_0000142819" description="Non-structural protein V">
    <location>
        <begin position="1"/>
        <end position="224"/>
    </location>
</feature>
<feature type="region of interest" description="Disordered" evidence="4">
    <location>
        <begin position="54"/>
        <end position="94"/>
    </location>
</feature>
<feature type="region of interest" description="Disordered" evidence="4">
    <location>
        <begin position="150"/>
        <end position="172"/>
    </location>
</feature>
<feature type="compositionally biased region" description="Polar residues" evidence="4">
    <location>
        <begin position="54"/>
        <end position="65"/>
    </location>
</feature>
<feature type="binding site" evidence="1">
    <location>
        <position position="170"/>
    </location>
    <ligand>
        <name>Zn(2+)</name>
        <dbReference type="ChEBI" id="CHEBI:29105"/>
        <label>1</label>
    </ligand>
</feature>
<feature type="binding site" evidence="1">
    <location>
        <position position="189"/>
    </location>
    <ligand>
        <name>Zn(2+)</name>
        <dbReference type="ChEBI" id="CHEBI:29105"/>
        <label>1</label>
    </ligand>
</feature>
<feature type="binding site" evidence="1">
    <location>
        <position position="193"/>
    </location>
    <ligand>
        <name>Zn(2+)</name>
        <dbReference type="ChEBI" id="CHEBI:29105"/>
        <label>2</label>
    </ligand>
</feature>
<feature type="binding site" evidence="1">
    <location>
        <position position="205"/>
    </location>
    <ligand>
        <name>Zn(2+)</name>
        <dbReference type="ChEBI" id="CHEBI:29105"/>
        <label>2</label>
    </ligand>
</feature>
<feature type="binding site" evidence="1">
    <location>
        <position position="207"/>
    </location>
    <ligand>
        <name>Zn(2+)</name>
        <dbReference type="ChEBI" id="CHEBI:29105"/>
        <label>2</label>
    </ligand>
</feature>
<feature type="binding site" evidence="1">
    <location>
        <position position="210"/>
    </location>
    <ligand>
        <name>Zn(2+)</name>
        <dbReference type="ChEBI" id="CHEBI:29105"/>
        <label>2</label>
    </ligand>
</feature>
<feature type="binding site" evidence="1">
    <location>
        <position position="214"/>
    </location>
    <ligand>
        <name>Zn(2+)</name>
        <dbReference type="ChEBI" id="CHEBI:29105"/>
        <label>1</label>
    </ligand>
</feature>
<feature type="binding site" evidence="1">
    <location>
        <position position="217"/>
    </location>
    <ligand>
        <name>Zn(2+)</name>
        <dbReference type="ChEBI" id="CHEBI:29105"/>
        <label>1</label>
    </ligand>
</feature>
<comment type="function">
    <text evidence="2 5">Plays an essential role in the inhibition of host immune response. Prevents the establishment of cellular antiviral state by blocking interferon-alpha/beta (IFN-alpha/beta) production and signaling pathway. Interacts with host IFIH1/MDA5 and DHX58/LGP2 to inhibit the transduction pathway involved in the activation of IFN-beta promoter, thus protecting the virus against cell antiviral state (PubMed:15563593). Blocks the type I and II interferon signaling pathways by interacting with host STAT1, STAT2 and STAT3, and mediating their ubiquitination and subsequent proteasomal degradation (By similarity).</text>
</comment>
<comment type="subunit">
    <text evidence="2 5">Interacts with host IFIH1/MDA5 and DHX58/LGP2 (PubMed:15563593). Forms with host DDB1, CUL4A, STAT1, STAT2 and STAT3 the mumps virus V-dependent complex (VDC) (By similarity).</text>
</comment>
<comment type="interaction">
    <interactant intactId="EBI-6599165">
        <id>P30927</id>
    </interactant>
    <interactant intactId="EBI-744193">
        <id>Q96C10</id>
        <label>DHX58</label>
    </interactant>
    <organismsDiffer>true</organismsDiffer>
    <experiments>2</experiments>
</comment>
<comment type="interaction">
    <interactant intactId="EBI-6599165">
        <id>P30927</id>
    </interactant>
    <interactant intactId="EBI-6115771">
        <id>Q9BYX4</id>
        <label>IFIH1</label>
    </interactant>
    <organismsDiffer>true</organismsDiffer>
    <experiments>2</experiments>
</comment>
<comment type="subcellular location">
    <subcellularLocation>
        <location evidence="3">Virion</location>
    </subcellularLocation>
    <subcellularLocation>
        <location evidence="7">Host cytoplasm</location>
    </subcellularLocation>
</comment>
<comment type="RNA editing">
    <location>
        <position position="155" evidence="6"/>
    </location>
    <text>Partially edited. RNA editing at this position consists of an insertion of 2 or 4 guanine nucleotides. The sequence displayed here is the V protein, derived from the unedited RNA. The edited RNA (+ 2 nucleotides) gives rise to the P protein (AC P16072). The edited RNA (+ 4 nucleotide) gives rise to the I protein.</text>
</comment>
<comment type="similarity">
    <text evidence="7">Belongs to the paramyxoviruses V protein family.</text>
</comment>
<keyword id="KW-1035">Host cytoplasm</keyword>
<keyword id="KW-0945">Host-virus interaction</keyword>
<keyword id="KW-1090">Inhibition of host innate immune response by virus</keyword>
<keyword id="KW-1114">Inhibition of host interferon signaling pathway by virus</keyword>
<keyword id="KW-1089">Inhibition of host MDA5 by virus</keyword>
<keyword id="KW-1113">Inhibition of host RLR pathway by virus</keyword>
<keyword id="KW-1105">Inhibition of host STAT1 by virus</keyword>
<keyword id="KW-1106">Inhibition of host STAT2 by virus</keyword>
<keyword id="KW-0922">Interferon antiviral system evasion</keyword>
<keyword id="KW-0479">Metal-binding</keyword>
<keyword id="KW-0691">RNA editing</keyword>
<keyword id="KW-0899">Viral immunoevasion</keyword>
<keyword id="KW-0946">Virion</keyword>
<keyword id="KW-0862">Zinc</keyword>
<reference key="1">
    <citation type="journal article" date="1988" name="J. Gen. Virol.">
        <title>Molecular cloning and sequence analysis of the mumps virus gene encoding the P protein: mumps virus P gene is monocistronic.</title>
        <authorList>
            <person name="Takeuchi K."/>
            <person name="Hishiyama M."/>
            <person name="Yamada A."/>
            <person name="Sugiura A."/>
        </authorList>
    </citation>
    <scope>NUCLEOTIDE SEQUENCE [GENOMIC RNA]</scope>
</reference>
<reference key="2">
    <citation type="journal article" date="1990" name="Virology">
        <title>Detection and characterization of mumps virus V protein.</title>
        <authorList>
            <person name="Takeuchi K."/>
            <person name="Tanabayashi K."/>
            <person name="Hishiyama M."/>
            <person name="Yamada Y.K."/>
            <person name="Yamada A."/>
            <person name="Sugiura A."/>
        </authorList>
    </citation>
    <scope>IDENTIFICATION</scope>
    <scope>RNA EDITING</scope>
</reference>
<reference key="3">
    <citation type="journal article" date="2004" name="Proc. Natl. Acad. Sci. U.S.A.">
        <title>The V proteins of paramyxoviruses bind the IFN-inducible RNA helicase, mda-5, and inhibit its activation of the IFN-beta promoter.</title>
        <authorList>
            <person name="Andrejeva J."/>
            <person name="Childs K.S."/>
            <person name="Young D.F."/>
            <person name="Carlos T.S."/>
            <person name="Stock N."/>
            <person name="Goodbourn S."/>
            <person name="Randall R.E."/>
        </authorList>
    </citation>
    <scope>INTERACTION WITH HUMAN IFIH1/MDA5</scope>
    <scope>INTERFERON EVASION</scope>
</reference>
<organismHost>
    <name type="scientific">Homo sapiens</name>
    <name type="common">Human</name>
    <dbReference type="NCBI Taxonomy" id="9606"/>
</organismHost>
<organism>
    <name type="scientific">Mumps virus (strain Enders)</name>
    <name type="common">MuV</name>
    <dbReference type="NCBI Taxonomy" id="11167"/>
    <lineage>
        <taxon>Viruses</taxon>
        <taxon>Riboviria</taxon>
        <taxon>Orthornavirae</taxon>
        <taxon>Negarnaviricota</taxon>
        <taxon>Haploviricotina</taxon>
        <taxon>Monjiviricetes</taxon>
        <taxon>Mononegavirales</taxon>
        <taxon>Paramyxoviridae</taxon>
        <taxon>Rubulavirinae</taxon>
        <taxon>Orthorubulavirus</taxon>
        <taxon>Orthorubulavirus parotitidis</taxon>
        <taxon>Mumps orthorubulavirus</taxon>
    </lineage>
</organism>
<dbReference type="EMBL" id="D00351">
    <property type="status" value="NOT_ANNOTATED_CDS"/>
    <property type="molecule type" value="Genomic_RNA"/>
</dbReference>
<dbReference type="SMR" id="P30927"/>
<dbReference type="IntAct" id="P30927">
    <property type="interactions" value="2"/>
</dbReference>
<dbReference type="GO" id="GO:0030430">
    <property type="term" value="C:host cell cytoplasm"/>
    <property type="evidence" value="ECO:0007669"/>
    <property type="project" value="UniProtKB-SubCell"/>
</dbReference>
<dbReference type="GO" id="GO:0046872">
    <property type="term" value="F:metal ion binding"/>
    <property type="evidence" value="ECO:0007669"/>
    <property type="project" value="UniProtKB-KW"/>
</dbReference>
<dbReference type="GO" id="GO:0039554">
    <property type="term" value="P:symbiont-mediated suppression of host cytoplasmic pattern recognition receptor signaling pathway via inhibition of MDA-5 activity"/>
    <property type="evidence" value="ECO:0007669"/>
    <property type="project" value="UniProtKB-KW"/>
</dbReference>
<dbReference type="GO" id="GO:0039563">
    <property type="term" value="P:symbiont-mediated suppression of host JAK-STAT cascade via inhibition of STAT1 activity"/>
    <property type="evidence" value="ECO:0007669"/>
    <property type="project" value="UniProtKB-KW"/>
</dbReference>
<dbReference type="GO" id="GO:0039564">
    <property type="term" value="P:symbiont-mediated suppression of host JAK-STAT cascade via inhibition of STAT2 activity"/>
    <property type="evidence" value="ECO:0007669"/>
    <property type="project" value="UniProtKB-KW"/>
</dbReference>
<dbReference type="GO" id="GO:0039502">
    <property type="term" value="P:symbiont-mediated suppression of host type I interferon-mediated signaling pathway"/>
    <property type="evidence" value="ECO:0007669"/>
    <property type="project" value="UniProtKB-KW"/>
</dbReference>
<dbReference type="FunFam" id="4.10.80.340:FF:000001">
    <property type="entry name" value="Protein V"/>
    <property type="match status" value="1"/>
</dbReference>
<dbReference type="Gene3D" id="4.10.80.340">
    <property type="match status" value="1"/>
</dbReference>
<dbReference type="InterPro" id="IPR024279">
    <property type="entry name" value="Paramyx_V_Zn-bd"/>
</dbReference>
<dbReference type="Pfam" id="PF13008">
    <property type="entry name" value="zf-Paramyx-P"/>
    <property type="match status" value="1"/>
</dbReference>
<accession>P30927</accession>
<name>V_MUMPE</name>